<keyword id="KW-0238">DNA-binding</keyword>
<keyword id="KW-1048">Host nucleus</keyword>
<keyword id="KW-0945">Host-virus interaction</keyword>
<keyword id="KW-0597">Phosphoprotein</keyword>
<keyword id="KW-1185">Reference proteome</keyword>
<keyword id="KW-0804">Transcription</keyword>
<keyword id="KW-0805">Transcription regulation</keyword>
<keyword id="KW-0946">Virion</keyword>
<keyword id="KW-0920">Virion tegument</keyword>
<accession>P28938</accession>
<accession>Q6DLJ9</accession>
<name>VP16_EHV1B</name>
<comment type="function">
    <text evidence="1">Transcriptional activator of immediate-early (IE) gene products (alpha genes). Acts as a key activator of lytic infection by initiating the lytic program through the assembly of the transcriptional regulatory VP16-induced complex composed of VP16 and two cellular factors, HCFC1 and POU2F1. VP16-induced complex represents a regulatory switch: when it is on, it promotes IE-gene expression and thus lytic infection, and when it is off, it limits IE-gene transcription favoring latent infection (By similarity).</text>
</comment>
<comment type="function">
    <text evidence="3">May play a role in the aggregation of tegument proteins around nucleocapsids during virus morphogenesis.</text>
</comment>
<comment type="subunit">
    <text evidence="1">Associates with the VP16-induced complex; binding to host HCFC1 activates VP16 for association with the octamer motif-binding host protein POU2F1, to form a multiprotein-DNA complex responsible for activating transcription of the viral immediate early genes.</text>
</comment>
<comment type="subcellular location">
    <subcellularLocation>
        <location evidence="2">Virion tegument</location>
    </subcellularLocation>
    <subcellularLocation>
        <location evidence="2">Host nucleus</location>
    </subcellularLocation>
</comment>
<comment type="similarity">
    <text evidence="3">Belongs to the herpesviridae tegument protein VP16 protein family.</text>
</comment>
<dbReference type="EMBL" id="AY665713">
    <property type="protein sequence ID" value="AAT67269.1"/>
    <property type="molecule type" value="Genomic_DNA"/>
</dbReference>
<dbReference type="PIR" id="D36796">
    <property type="entry name" value="IXBEA1"/>
</dbReference>
<dbReference type="SMR" id="P28938"/>
<dbReference type="Proteomes" id="UP000001189">
    <property type="component" value="Segment"/>
</dbReference>
<dbReference type="GO" id="GO:0042025">
    <property type="term" value="C:host cell nucleus"/>
    <property type="evidence" value="ECO:0007669"/>
    <property type="project" value="UniProtKB-SubCell"/>
</dbReference>
<dbReference type="GO" id="GO:0019033">
    <property type="term" value="C:viral tegument"/>
    <property type="evidence" value="ECO:0007669"/>
    <property type="project" value="UniProtKB-SubCell"/>
</dbReference>
<dbReference type="GO" id="GO:0003677">
    <property type="term" value="F:DNA binding"/>
    <property type="evidence" value="ECO:0007669"/>
    <property type="project" value="UniProtKB-KW"/>
</dbReference>
<dbReference type="GO" id="GO:0039695">
    <property type="term" value="P:DNA-templated viral transcription"/>
    <property type="evidence" value="ECO:0000250"/>
    <property type="project" value="UniProtKB"/>
</dbReference>
<dbReference type="GO" id="GO:0006355">
    <property type="term" value="P:regulation of DNA-templated transcription"/>
    <property type="evidence" value="ECO:0007669"/>
    <property type="project" value="InterPro"/>
</dbReference>
<dbReference type="FunFam" id="1.10.1290.10:FF:000001">
    <property type="entry name" value="Tegument protein VP16"/>
    <property type="match status" value="1"/>
</dbReference>
<dbReference type="Gene3D" id="1.10.1290.10">
    <property type="entry name" value="Alpha trans-inducing (Alpha-TIF)"/>
    <property type="match status" value="1"/>
</dbReference>
<dbReference type="InterPro" id="IPR003174">
    <property type="entry name" value="Alpha_TIF"/>
</dbReference>
<dbReference type="InterPro" id="IPR036538">
    <property type="entry name" value="Alpha_TIF_sf"/>
</dbReference>
<dbReference type="Pfam" id="PF02232">
    <property type="entry name" value="Alpha_TIF"/>
    <property type="match status" value="1"/>
</dbReference>
<dbReference type="SMART" id="SM00814">
    <property type="entry name" value="Alpha_TIF"/>
    <property type="match status" value="1"/>
</dbReference>
<dbReference type="SUPFAM" id="SSF56548">
    <property type="entry name" value="Conserved core of transcriptional regulatory protein vp16"/>
    <property type="match status" value="1"/>
</dbReference>
<sequence length="479" mass="53647">MCLLHISLPYLSCALLPGWYFDARPAASIVMFAAAEENDDPYPGKSGYNDTCELMDMDGAVASFDEGMLSAIESVYSIPTKKRLALPPPKAASPGALYQRLQGELGFPEGQTLLSAMEKWNEDMFSALPGHVDLYTEIALLSTSVDEVVRAGLDSLPTPSHYSPEVDLNAHGDEPFPEVPALEDDLEIYVISAQRFYLSELRTREEHYARLLRGYCVALLHYLYGSAKRQLRGSGSDASLMHKFKQVVRDRYYREAANLARLLYLHLYVSVTREVSWRLHASQVINQGVFVSLHYFWAQRRKFECLFHPVLFNHGVVILENDPLEFHDLQRINYRRRELGLPLIRAGLIEEENSPLEAEPLFSGKLPRTIGFLTHQIRTKMEAYSDAHPATPLFPLAEHSYSKRIGGRLSYGTTTEAMMDPPSPSAVLPGDPVPPLTVGVRQTAATLAIPSNLTLQSMETDGLDYSSMTGDELNQMFDI</sequence>
<organismHost>
    <name type="scientific">Equus caballus</name>
    <name type="common">Horse</name>
    <dbReference type="NCBI Taxonomy" id="9796"/>
</organismHost>
<gene>
    <name type="ordered locus">12</name>
</gene>
<protein>
    <recommendedName>
        <fullName>Tegument protein VP16 homolog</fullName>
    </recommendedName>
    <alternativeName>
        <fullName>Alpha trans-inducing protein</fullName>
    </alternativeName>
    <alternativeName>
        <fullName>Alpha-TIF</fullName>
    </alternativeName>
</protein>
<evidence type="ECO:0000250" key="1"/>
<evidence type="ECO:0000250" key="2">
    <source>
        <dbReference type="UniProtKB" id="P04486"/>
    </source>
</evidence>
<evidence type="ECO:0000305" key="3"/>
<organism>
    <name type="scientific">Equine herpesvirus 1 (strain Ab4p)</name>
    <name type="common">EHV-1</name>
    <name type="synonym">Equine abortion virus</name>
    <dbReference type="NCBI Taxonomy" id="31520"/>
    <lineage>
        <taxon>Viruses</taxon>
        <taxon>Duplodnaviria</taxon>
        <taxon>Heunggongvirae</taxon>
        <taxon>Peploviricota</taxon>
        <taxon>Herviviricetes</taxon>
        <taxon>Herpesvirales</taxon>
        <taxon>Orthoherpesviridae</taxon>
        <taxon>Alphaherpesvirinae</taxon>
        <taxon>Varicellovirus</taxon>
        <taxon>Varicellovirus equidalpha1</taxon>
        <taxon>Equid alphaherpesvirus 1</taxon>
    </lineage>
</organism>
<feature type="chain" id="PRO_0000115803" description="Tegument protein VP16 homolog">
    <location>
        <begin position="1"/>
        <end position="479"/>
    </location>
</feature>
<reference key="1">
    <citation type="journal article" date="1992" name="Virology">
        <title>The DNA sequence of equine herpesvirus-1.</title>
        <authorList>
            <person name="Telford E.A.R."/>
            <person name="Watson M.S."/>
            <person name="McBride K."/>
            <person name="Davison A.J."/>
        </authorList>
    </citation>
    <scope>NUCLEOTIDE SEQUENCE [LARGE SCALE GENOMIC DNA]</scope>
</reference>
<proteinExistence type="inferred from homology"/>